<protein>
    <recommendedName>
        <fullName evidence="1">Probable endonuclease 4</fullName>
        <ecNumber evidence="1">3.1.21.2</ecNumber>
    </recommendedName>
    <alternativeName>
        <fullName evidence="1">Endodeoxyribonuclease IV</fullName>
    </alternativeName>
    <alternativeName>
        <fullName evidence="1">Endonuclease IV</fullName>
    </alternativeName>
</protein>
<comment type="function">
    <text evidence="1">Endonuclease IV plays a role in DNA repair. It cleaves phosphodiester bonds at apurinic or apyrimidinic (AP) sites, generating a 3'-hydroxyl group and a 5'-terminal sugar phosphate.</text>
</comment>
<comment type="catalytic activity">
    <reaction evidence="1">
        <text>Endonucleolytic cleavage to 5'-phosphooligonucleotide end-products.</text>
        <dbReference type="EC" id="3.1.21.2"/>
    </reaction>
</comment>
<comment type="cofactor">
    <cofactor evidence="1">
        <name>Zn(2+)</name>
        <dbReference type="ChEBI" id="CHEBI:29105"/>
    </cofactor>
    <text evidence="1">Binds 3 Zn(2+) ions.</text>
</comment>
<comment type="similarity">
    <text evidence="1">Belongs to the AP endonuclease 2 family.</text>
</comment>
<organism>
    <name type="scientific">Escherichia coli O9:H4 (strain HS)</name>
    <dbReference type="NCBI Taxonomy" id="331112"/>
    <lineage>
        <taxon>Bacteria</taxon>
        <taxon>Pseudomonadati</taxon>
        <taxon>Pseudomonadota</taxon>
        <taxon>Gammaproteobacteria</taxon>
        <taxon>Enterobacterales</taxon>
        <taxon>Enterobacteriaceae</taxon>
        <taxon>Escherichia</taxon>
    </lineage>
</organism>
<gene>
    <name evidence="1" type="primary">nfo</name>
    <name type="ordered locus">EcHS_A2295</name>
</gene>
<keyword id="KW-0227">DNA damage</keyword>
<keyword id="KW-0234">DNA repair</keyword>
<keyword id="KW-0255">Endonuclease</keyword>
<keyword id="KW-0378">Hydrolase</keyword>
<keyword id="KW-0479">Metal-binding</keyword>
<keyword id="KW-0540">Nuclease</keyword>
<keyword id="KW-0862">Zinc</keyword>
<name>END4_ECOHS</name>
<sequence length="285" mass="31492">MKYIGAHVSAAGGLANAAIRAAEIDATAFALFTKNQRQWRAAPLTTQTIDEFKAACEKYHYTSAQILPHDSYLINLGHPVTEALEKSRDAFIDEMQRCEQLGLSLLNFHPGSHLMQISEEDCLARIAESINIALDKTQGVTAVIENTAGQGSNLGFKFEHLAAIIDGVEDKSRVGVCIDTCHAFAAGYDLRTPAECEKTFADFARIVGFKYLRGMHLNDAKSTFGSRVDRHHSLGEGNIGHDAFRWIMQDDRFDGIPLILETINPDIWAEEIAWLKAQQTEKAVA</sequence>
<feature type="chain" id="PRO_1000058175" description="Probable endonuclease 4">
    <location>
        <begin position="1"/>
        <end position="285"/>
    </location>
</feature>
<feature type="binding site" evidence="1">
    <location>
        <position position="69"/>
    </location>
    <ligand>
        <name>Zn(2+)</name>
        <dbReference type="ChEBI" id="CHEBI:29105"/>
        <label>1</label>
    </ligand>
</feature>
<feature type="binding site" evidence="1">
    <location>
        <position position="109"/>
    </location>
    <ligand>
        <name>Zn(2+)</name>
        <dbReference type="ChEBI" id="CHEBI:29105"/>
        <label>1</label>
    </ligand>
</feature>
<feature type="binding site" evidence="1">
    <location>
        <position position="145"/>
    </location>
    <ligand>
        <name>Zn(2+)</name>
        <dbReference type="ChEBI" id="CHEBI:29105"/>
        <label>1</label>
    </ligand>
</feature>
<feature type="binding site" evidence="1">
    <location>
        <position position="145"/>
    </location>
    <ligand>
        <name>Zn(2+)</name>
        <dbReference type="ChEBI" id="CHEBI:29105"/>
        <label>2</label>
    </ligand>
</feature>
<feature type="binding site" evidence="1">
    <location>
        <position position="179"/>
    </location>
    <ligand>
        <name>Zn(2+)</name>
        <dbReference type="ChEBI" id="CHEBI:29105"/>
        <label>2</label>
    </ligand>
</feature>
<feature type="binding site" evidence="1">
    <location>
        <position position="182"/>
    </location>
    <ligand>
        <name>Zn(2+)</name>
        <dbReference type="ChEBI" id="CHEBI:29105"/>
        <label>3</label>
    </ligand>
</feature>
<feature type="binding site" evidence="1">
    <location>
        <position position="216"/>
    </location>
    <ligand>
        <name>Zn(2+)</name>
        <dbReference type="ChEBI" id="CHEBI:29105"/>
        <label>2</label>
    </ligand>
</feature>
<feature type="binding site" evidence="1">
    <location>
        <position position="229"/>
    </location>
    <ligand>
        <name>Zn(2+)</name>
        <dbReference type="ChEBI" id="CHEBI:29105"/>
        <label>3</label>
    </ligand>
</feature>
<feature type="binding site" evidence="1">
    <location>
        <position position="231"/>
    </location>
    <ligand>
        <name>Zn(2+)</name>
        <dbReference type="ChEBI" id="CHEBI:29105"/>
        <label>3</label>
    </ligand>
</feature>
<feature type="binding site" evidence="1">
    <location>
        <position position="261"/>
    </location>
    <ligand>
        <name>Zn(2+)</name>
        <dbReference type="ChEBI" id="CHEBI:29105"/>
        <label>2</label>
    </ligand>
</feature>
<reference key="1">
    <citation type="journal article" date="2008" name="J. Bacteriol.">
        <title>The pangenome structure of Escherichia coli: comparative genomic analysis of E. coli commensal and pathogenic isolates.</title>
        <authorList>
            <person name="Rasko D.A."/>
            <person name="Rosovitz M.J."/>
            <person name="Myers G.S.A."/>
            <person name="Mongodin E.F."/>
            <person name="Fricke W.F."/>
            <person name="Gajer P."/>
            <person name="Crabtree J."/>
            <person name="Sebaihia M."/>
            <person name="Thomson N.R."/>
            <person name="Chaudhuri R."/>
            <person name="Henderson I.R."/>
            <person name="Sperandio V."/>
            <person name="Ravel J."/>
        </authorList>
    </citation>
    <scope>NUCLEOTIDE SEQUENCE [LARGE SCALE GENOMIC DNA]</scope>
    <source>
        <strain>HS</strain>
    </source>
</reference>
<proteinExistence type="inferred from homology"/>
<accession>A8A222</accession>
<evidence type="ECO:0000255" key="1">
    <source>
        <dbReference type="HAMAP-Rule" id="MF_00152"/>
    </source>
</evidence>
<dbReference type="EC" id="3.1.21.2" evidence="1"/>
<dbReference type="EMBL" id="CP000802">
    <property type="protein sequence ID" value="ABV06576.1"/>
    <property type="molecule type" value="Genomic_DNA"/>
</dbReference>
<dbReference type="RefSeq" id="WP_000873890.1">
    <property type="nucleotide sequence ID" value="NC_009800.1"/>
</dbReference>
<dbReference type="SMR" id="A8A222"/>
<dbReference type="GeneID" id="93775023"/>
<dbReference type="KEGG" id="ecx:EcHS_A2295"/>
<dbReference type="HOGENOM" id="CLU_025885_0_4_6"/>
<dbReference type="GO" id="GO:0008833">
    <property type="term" value="F:deoxyribonuclease IV (phage-T4-induced) activity"/>
    <property type="evidence" value="ECO:0007669"/>
    <property type="project" value="UniProtKB-UniRule"/>
</dbReference>
<dbReference type="GO" id="GO:0003677">
    <property type="term" value="F:DNA binding"/>
    <property type="evidence" value="ECO:0007669"/>
    <property type="project" value="InterPro"/>
</dbReference>
<dbReference type="GO" id="GO:0003906">
    <property type="term" value="F:DNA-(apurinic or apyrimidinic site) endonuclease activity"/>
    <property type="evidence" value="ECO:0007669"/>
    <property type="project" value="TreeGrafter"/>
</dbReference>
<dbReference type="GO" id="GO:0008081">
    <property type="term" value="F:phosphoric diester hydrolase activity"/>
    <property type="evidence" value="ECO:0007669"/>
    <property type="project" value="TreeGrafter"/>
</dbReference>
<dbReference type="GO" id="GO:0008270">
    <property type="term" value="F:zinc ion binding"/>
    <property type="evidence" value="ECO:0007669"/>
    <property type="project" value="UniProtKB-UniRule"/>
</dbReference>
<dbReference type="GO" id="GO:0006284">
    <property type="term" value="P:base-excision repair"/>
    <property type="evidence" value="ECO:0007669"/>
    <property type="project" value="TreeGrafter"/>
</dbReference>
<dbReference type="CDD" id="cd00019">
    <property type="entry name" value="AP2Ec"/>
    <property type="match status" value="1"/>
</dbReference>
<dbReference type="FunFam" id="3.20.20.150:FF:000001">
    <property type="entry name" value="Probable endonuclease 4"/>
    <property type="match status" value="1"/>
</dbReference>
<dbReference type="Gene3D" id="3.20.20.150">
    <property type="entry name" value="Divalent-metal-dependent TIM barrel enzymes"/>
    <property type="match status" value="1"/>
</dbReference>
<dbReference type="HAMAP" id="MF_00152">
    <property type="entry name" value="Nfo"/>
    <property type="match status" value="1"/>
</dbReference>
<dbReference type="InterPro" id="IPR001719">
    <property type="entry name" value="AP_endonuc_2"/>
</dbReference>
<dbReference type="InterPro" id="IPR018246">
    <property type="entry name" value="AP_endonuc_F2_Zn_BS"/>
</dbReference>
<dbReference type="InterPro" id="IPR036237">
    <property type="entry name" value="Xyl_isomerase-like_sf"/>
</dbReference>
<dbReference type="InterPro" id="IPR013022">
    <property type="entry name" value="Xyl_isomerase-like_TIM-brl"/>
</dbReference>
<dbReference type="NCBIfam" id="TIGR00587">
    <property type="entry name" value="nfo"/>
    <property type="match status" value="1"/>
</dbReference>
<dbReference type="NCBIfam" id="NF002199">
    <property type="entry name" value="PRK01060.1-4"/>
    <property type="match status" value="1"/>
</dbReference>
<dbReference type="PANTHER" id="PTHR21445:SF0">
    <property type="entry name" value="APURINIC-APYRIMIDINIC ENDONUCLEASE"/>
    <property type="match status" value="1"/>
</dbReference>
<dbReference type="PANTHER" id="PTHR21445">
    <property type="entry name" value="ENDONUCLEASE IV ENDODEOXYRIBONUCLEASE IV"/>
    <property type="match status" value="1"/>
</dbReference>
<dbReference type="Pfam" id="PF01261">
    <property type="entry name" value="AP_endonuc_2"/>
    <property type="match status" value="1"/>
</dbReference>
<dbReference type="SMART" id="SM00518">
    <property type="entry name" value="AP2Ec"/>
    <property type="match status" value="1"/>
</dbReference>
<dbReference type="SUPFAM" id="SSF51658">
    <property type="entry name" value="Xylose isomerase-like"/>
    <property type="match status" value="1"/>
</dbReference>
<dbReference type="PROSITE" id="PS00729">
    <property type="entry name" value="AP_NUCLEASE_F2_1"/>
    <property type="match status" value="1"/>
</dbReference>
<dbReference type="PROSITE" id="PS00730">
    <property type="entry name" value="AP_NUCLEASE_F2_2"/>
    <property type="match status" value="1"/>
</dbReference>
<dbReference type="PROSITE" id="PS00731">
    <property type="entry name" value="AP_NUCLEASE_F2_3"/>
    <property type="match status" value="1"/>
</dbReference>
<dbReference type="PROSITE" id="PS51432">
    <property type="entry name" value="AP_NUCLEASE_F2_4"/>
    <property type="match status" value="1"/>
</dbReference>